<protein>
    <recommendedName>
        <fullName evidence="1">Large ribosomal subunit protein bL33B</fullName>
    </recommendedName>
    <alternativeName>
        <fullName evidence="1">50S ribosomal protein L33 2</fullName>
    </alternativeName>
</protein>
<sequence length="55" mass="6621">MAKSQDVRPVIKLRSTGGTGYTYVTRKNRRNDPDRMVVRKYDPVLRRHVDFREER</sequence>
<feature type="chain" id="PRO_0000356489" description="Large ribosomal subunit protein bL33B">
    <location>
        <begin position="1"/>
        <end position="55"/>
    </location>
</feature>
<reference key="1">
    <citation type="journal article" date="2008" name="PLoS ONE">
        <title>Survival in nuclear waste, extreme resistance, and potential applications gleaned from the genome sequence of Kineococcus radiotolerans SRS30216.</title>
        <authorList>
            <person name="Bagwell C.E."/>
            <person name="Bhat S."/>
            <person name="Hawkins G.M."/>
            <person name="Smith B.W."/>
            <person name="Biswas T."/>
            <person name="Hoover T.R."/>
            <person name="Saunders E."/>
            <person name="Han C.S."/>
            <person name="Tsodikov O.V."/>
            <person name="Shimkets L.J."/>
        </authorList>
    </citation>
    <scope>NUCLEOTIDE SEQUENCE [LARGE SCALE GENOMIC DNA]</scope>
    <source>
        <strain>ATCC BAA-149 / DSM 14245 / SRS30216</strain>
    </source>
</reference>
<gene>
    <name evidence="1" type="primary">rpmG2</name>
    <name type="ordered locus">Krad_0286</name>
</gene>
<accession>A6W4N7</accession>
<proteinExistence type="inferred from homology"/>
<evidence type="ECO:0000255" key="1">
    <source>
        <dbReference type="HAMAP-Rule" id="MF_00294"/>
    </source>
</evidence>
<comment type="similarity">
    <text evidence="1">Belongs to the bacterial ribosomal protein bL33 family.</text>
</comment>
<name>RL332_KINRD</name>
<dbReference type="EMBL" id="CP000750">
    <property type="protein sequence ID" value="ABS01776.1"/>
    <property type="molecule type" value="Genomic_DNA"/>
</dbReference>
<dbReference type="RefSeq" id="WP_012085401.1">
    <property type="nucleotide sequence ID" value="NC_009664.2"/>
</dbReference>
<dbReference type="SMR" id="A6W4N7"/>
<dbReference type="STRING" id="266940.Krad_0286"/>
<dbReference type="KEGG" id="kra:Krad_0286"/>
<dbReference type="eggNOG" id="COG0267">
    <property type="taxonomic scope" value="Bacteria"/>
</dbReference>
<dbReference type="HOGENOM" id="CLU_190949_1_1_11"/>
<dbReference type="OrthoDB" id="21586at2"/>
<dbReference type="Proteomes" id="UP000001116">
    <property type="component" value="Chromosome"/>
</dbReference>
<dbReference type="GO" id="GO:0022625">
    <property type="term" value="C:cytosolic large ribosomal subunit"/>
    <property type="evidence" value="ECO:0007669"/>
    <property type="project" value="TreeGrafter"/>
</dbReference>
<dbReference type="GO" id="GO:0003735">
    <property type="term" value="F:structural constituent of ribosome"/>
    <property type="evidence" value="ECO:0007669"/>
    <property type="project" value="InterPro"/>
</dbReference>
<dbReference type="GO" id="GO:0006412">
    <property type="term" value="P:translation"/>
    <property type="evidence" value="ECO:0007669"/>
    <property type="project" value="UniProtKB-UniRule"/>
</dbReference>
<dbReference type="FunFam" id="2.20.28.120:FF:000002">
    <property type="entry name" value="50S ribosomal protein L33"/>
    <property type="match status" value="1"/>
</dbReference>
<dbReference type="Gene3D" id="2.20.28.120">
    <property type="entry name" value="Ribosomal protein L33"/>
    <property type="match status" value="1"/>
</dbReference>
<dbReference type="HAMAP" id="MF_00294">
    <property type="entry name" value="Ribosomal_bL33"/>
    <property type="match status" value="1"/>
</dbReference>
<dbReference type="InterPro" id="IPR001705">
    <property type="entry name" value="Ribosomal_bL33"/>
</dbReference>
<dbReference type="InterPro" id="IPR018264">
    <property type="entry name" value="Ribosomal_bL33_CS"/>
</dbReference>
<dbReference type="InterPro" id="IPR038584">
    <property type="entry name" value="Ribosomal_bL33_sf"/>
</dbReference>
<dbReference type="InterPro" id="IPR011332">
    <property type="entry name" value="Ribosomal_zn-bd"/>
</dbReference>
<dbReference type="NCBIfam" id="NF001860">
    <property type="entry name" value="PRK00595.1"/>
    <property type="match status" value="1"/>
</dbReference>
<dbReference type="NCBIfam" id="TIGR01023">
    <property type="entry name" value="rpmG_bact"/>
    <property type="match status" value="1"/>
</dbReference>
<dbReference type="PANTHER" id="PTHR15238">
    <property type="entry name" value="54S RIBOSOMAL PROTEIN L39, MITOCHONDRIAL"/>
    <property type="match status" value="1"/>
</dbReference>
<dbReference type="PANTHER" id="PTHR15238:SF1">
    <property type="entry name" value="LARGE RIBOSOMAL SUBUNIT PROTEIN BL33M"/>
    <property type="match status" value="1"/>
</dbReference>
<dbReference type="Pfam" id="PF00471">
    <property type="entry name" value="Ribosomal_L33"/>
    <property type="match status" value="1"/>
</dbReference>
<dbReference type="SUPFAM" id="SSF57829">
    <property type="entry name" value="Zn-binding ribosomal proteins"/>
    <property type="match status" value="1"/>
</dbReference>
<dbReference type="PROSITE" id="PS00582">
    <property type="entry name" value="RIBOSOMAL_L33"/>
    <property type="match status" value="1"/>
</dbReference>
<keyword id="KW-1185">Reference proteome</keyword>
<keyword id="KW-0687">Ribonucleoprotein</keyword>
<keyword id="KW-0689">Ribosomal protein</keyword>
<organism>
    <name type="scientific">Kineococcus radiotolerans (strain ATCC BAA-149 / DSM 14245 / SRS30216)</name>
    <dbReference type="NCBI Taxonomy" id="266940"/>
    <lineage>
        <taxon>Bacteria</taxon>
        <taxon>Bacillati</taxon>
        <taxon>Actinomycetota</taxon>
        <taxon>Actinomycetes</taxon>
        <taxon>Kineosporiales</taxon>
        <taxon>Kineosporiaceae</taxon>
        <taxon>Kineococcus</taxon>
    </lineage>
</organism>